<reference key="1">
    <citation type="submission" date="2007-07" db="EMBL/GenBank/DDBJ databases">
        <authorList>
            <consortium name="NIH - Mammalian Gene Collection (MGC) project"/>
        </authorList>
    </citation>
    <scope>NUCLEOTIDE SEQUENCE [LARGE SCALE MRNA]</scope>
    <source>
        <strain>Hereford</strain>
        <tissue>Thymus</tissue>
    </source>
</reference>
<protein>
    <recommendedName>
        <fullName>Protein arginine N-methyltransferase 7</fullName>
        <ecNumber evidence="3">2.1.1.321</ecNumber>
    </recommendedName>
    <alternativeName>
        <fullName>Histone-arginine N-methyltransferase PRMT7</fullName>
    </alternativeName>
    <alternativeName>
        <fullName>[Myelin basic protein]-arginine N-methyltransferase PRMT7</fullName>
    </alternativeName>
</protein>
<feature type="chain" id="PRO_0000373901" description="Protein arginine N-methyltransferase 7">
    <location>
        <begin position="1"/>
        <end position="695"/>
    </location>
</feature>
<feature type="domain" description="SAM-dependent MTase PRMT-type 1" evidence="4">
    <location>
        <begin position="14"/>
        <end position="345"/>
    </location>
</feature>
<feature type="domain" description="SAM-dependent MTase PRMT-type 2" evidence="4">
    <location>
        <begin position="358"/>
        <end position="684"/>
    </location>
</feature>
<feature type="active site" evidence="1">
    <location>
        <position position="144"/>
    </location>
</feature>
<feature type="active site" evidence="1">
    <location>
        <position position="153"/>
    </location>
</feature>
<feature type="modified residue" description="Omega-N-methylarginine" evidence="2">
    <location>
        <position position="32"/>
    </location>
</feature>
<proteinExistence type="evidence at transcript level"/>
<sequence>MKVFCGRANPTTGSVEWLEEDEHYDYHQEIARSSYADMLHDKDRNMKYYQGIRAAVSRVKDRGQKALVLDIGTGTGLLSMMAVTAGADFCYAIEVFKPMADAAVKIVEKNGFSDKIKVINKHSTEVTVGPDGDMPCRANILITELFDTELIGEGALPSYEHAHRHLVQANCEAVPHRATVYAQLVESRRMWSWNKLFPIRVQTSRGERVIIPPLELERCPGAPSVCDIQLNQVSPADFTILSDVLPMFSVDFSKQVSSSAACHSRQFEPLVSGRAQVVLSWWDIEMDPEGKIKCTMAPSWAHSDPEELQWRDHWMQCVYFLPQEEPVVQGLALCLVAYHDDYCVWYSLQKTSPEKNGRVHPVRPVCDCQAHLLWNRPRFGEINDRNRTDQYIQALRTVLKPDSVCLCVSDGSLLSMLAYHLGVEQVFTIENSAVSHRLMKKIFKANHLEDKINIIEKRPELLTPADLEGKKVSLLLGEPFFTTSLLPWHNLYFWYVRTAVDQHLGPGAVVMPQAASLHVVVVEFRDLWRIRSPCGDCEGFDVHIMDDMIKRALDFRESKEAEPHPLWEYPCSSLSEPQQILTFDFRQPVPLQPIHAEGTIELRRCGRSHGAVLWMEYHLTADSTVSTGLLKSAEDEGDCCWNPHCKQAVYFFNTTLDPRAPPGSSQTVTYTVEFHPHTGDITMDFTLSDALDSGC</sequence>
<organism>
    <name type="scientific">Bos taurus</name>
    <name type="common">Bovine</name>
    <dbReference type="NCBI Taxonomy" id="9913"/>
    <lineage>
        <taxon>Eukaryota</taxon>
        <taxon>Metazoa</taxon>
        <taxon>Chordata</taxon>
        <taxon>Craniata</taxon>
        <taxon>Vertebrata</taxon>
        <taxon>Euteleostomi</taxon>
        <taxon>Mammalia</taxon>
        <taxon>Eutheria</taxon>
        <taxon>Laurasiatheria</taxon>
        <taxon>Artiodactyla</taxon>
        <taxon>Ruminantia</taxon>
        <taxon>Pecora</taxon>
        <taxon>Bovidae</taxon>
        <taxon>Bovinae</taxon>
        <taxon>Bos</taxon>
    </lineage>
</organism>
<evidence type="ECO:0000250" key="1"/>
<evidence type="ECO:0000250" key="2">
    <source>
        <dbReference type="UniProtKB" id="Q922X9"/>
    </source>
</evidence>
<evidence type="ECO:0000250" key="3">
    <source>
        <dbReference type="UniProtKB" id="Q9NVM4"/>
    </source>
</evidence>
<evidence type="ECO:0000255" key="4">
    <source>
        <dbReference type="PROSITE-ProRule" id="PRU01015"/>
    </source>
</evidence>
<gene>
    <name type="primary">PRMT7</name>
</gene>
<dbReference type="EC" id="2.1.1.321" evidence="3"/>
<dbReference type="EMBL" id="BC150009">
    <property type="protein sequence ID" value="AAI50010.1"/>
    <property type="molecule type" value="mRNA"/>
</dbReference>
<dbReference type="RefSeq" id="NP_001095460.1">
    <property type="nucleotide sequence ID" value="NM_001101990.2"/>
</dbReference>
<dbReference type="SMR" id="A6QQV6"/>
<dbReference type="FunCoup" id="A6QQV6">
    <property type="interactions" value="3832"/>
</dbReference>
<dbReference type="STRING" id="9913.ENSBTAP00000069153"/>
<dbReference type="PaxDb" id="9913-ENSBTAP00000012699"/>
<dbReference type="GeneID" id="514202"/>
<dbReference type="KEGG" id="bta:514202"/>
<dbReference type="CTD" id="54496"/>
<dbReference type="eggNOG" id="KOG1501">
    <property type="taxonomic scope" value="Eukaryota"/>
</dbReference>
<dbReference type="InParanoid" id="A6QQV6"/>
<dbReference type="OrthoDB" id="412876at2759"/>
<dbReference type="Proteomes" id="UP000009136">
    <property type="component" value="Unplaced"/>
</dbReference>
<dbReference type="GO" id="GO:0005829">
    <property type="term" value="C:cytosol"/>
    <property type="evidence" value="ECO:0000250"/>
    <property type="project" value="UniProtKB"/>
</dbReference>
<dbReference type="GO" id="GO:0005634">
    <property type="term" value="C:nucleus"/>
    <property type="evidence" value="ECO:0000250"/>
    <property type="project" value="UniProtKB"/>
</dbReference>
<dbReference type="GO" id="GO:0044020">
    <property type="term" value="F:histone H4R3 methyltransferase activity"/>
    <property type="evidence" value="ECO:0000250"/>
    <property type="project" value="UniProtKB"/>
</dbReference>
<dbReference type="GO" id="GO:0042054">
    <property type="term" value="F:histone methyltransferase activity"/>
    <property type="evidence" value="ECO:0000318"/>
    <property type="project" value="GO_Central"/>
</dbReference>
<dbReference type="GO" id="GO:0016274">
    <property type="term" value="F:protein-arginine N-methyltransferase activity"/>
    <property type="evidence" value="ECO:0000318"/>
    <property type="project" value="GO_Central"/>
</dbReference>
<dbReference type="GO" id="GO:0035241">
    <property type="term" value="F:protein-arginine omega-N monomethyltransferase activity"/>
    <property type="evidence" value="ECO:0007669"/>
    <property type="project" value="UniProtKB-EC"/>
</dbReference>
<dbReference type="GO" id="GO:0035243">
    <property type="term" value="F:protein-arginine omega-N symmetric methyltransferase activity"/>
    <property type="evidence" value="ECO:0000250"/>
    <property type="project" value="UniProtKB"/>
</dbReference>
<dbReference type="GO" id="GO:0006338">
    <property type="term" value="P:chromatin remodeling"/>
    <property type="evidence" value="ECO:0000318"/>
    <property type="project" value="GO_Central"/>
</dbReference>
<dbReference type="GO" id="GO:0071514">
    <property type="term" value="P:genomic imprinting"/>
    <property type="evidence" value="ECO:0000250"/>
    <property type="project" value="UniProtKB"/>
</dbReference>
<dbReference type="GO" id="GO:0018216">
    <property type="term" value="P:peptidyl-arginine methylation"/>
    <property type="evidence" value="ECO:0000250"/>
    <property type="project" value="UniProtKB"/>
</dbReference>
<dbReference type="GO" id="GO:0006355">
    <property type="term" value="P:regulation of DNA-templated transcription"/>
    <property type="evidence" value="ECO:0000318"/>
    <property type="project" value="GO_Central"/>
</dbReference>
<dbReference type="GO" id="GO:0000387">
    <property type="term" value="P:spliceosomal snRNP assembly"/>
    <property type="evidence" value="ECO:0000250"/>
    <property type="project" value="UniProtKB"/>
</dbReference>
<dbReference type="CDD" id="cd02440">
    <property type="entry name" value="AdoMet_MTases"/>
    <property type="match status" value="1"/>
</dbReference>
<dbReference type="FunFam" id="2.70.160.11:FF:000010">
    <property type="entry name" value="Protein arginine N-methyltransferase"/>
    <property type="match status" value="1"/>
</dbReference>
<dbReference type="FunFam" id="2.70.160.11:FF:000004">
    <property type="entry name" value="Protein arginine N-methyltransferase 7"/>
    <property type="match status" value="1"/>
</dbReference>
<dbReference type="FunFam" id="3.40.50.150:FF:000070">
    <property type="entry name" value="Protein arginine N-methyltransferase 7"/>
    <property type="match status" value="1"/>
</dbReference>
<dbReference type="FunFam" id="3.40.50.150:FF:000071">
    <property type="entry name" value="Protein arginine N-methyltransferase 7"/>
    <property type="match status" value="1"/>
</dbReference>
<dbReference type="Gene3D" id="2.70.160.11">
    <property type="entry name" value="Hnrnp arginine n-methyltransferase1"/>
    <property type="match status" value="2"/>
</dbReference>
<dbReference type="Gene3D" id="3.40.50.150">
    <property type="entry name" value="Vaccinia Virus protein VP39"/>
    <property type="match status" value="2"/>
</dbReference>
<dbReference type="InterPro" id="IPR025799">
    <property type="entry name" value="Arg_MeTrfase"/>
</dbReference>
<dbReference type="InterPro" id="IPR014644">
    <property type="entry name" value="MeTrfase_PRMT7"/>
</dbReference>
<dbReference type="InterPro" id="IPR055135">
    <property type="entry name" value="PRMT_dom"/>
</dbReference>
<dbReference type="InterPro" id="IPR029063">
    <property type="entry name" value="SAM-dependent_MTases_sf"/>
</dbReference>
<dbReference type="PANTHER" id="PTHR11006">
    <property type="entry name" value="PROTEIN ARGININE N-METHYLTRANSFERASE"/>
    <property type="match status" value="1"/>
</dbReference>
<dbReference type="PANTHER" id="PTHR11006:SF4">
    <property type="entry name" value="PROTEIN ARGININE N-METHYLTRANSFERASE 7"/>
    <property type="match status" value="1"/>
</dbReference>
<dbReference type="Pfam" id="PF06325">
    <property type="entry name" value="PrmA"/>
    <property type="match status" value="1"/>
</dbReference>
<dbReference type="Pfam" id="PF22528">
    <property type="entry name" value="PRMT_C"/>
    <property type="match status" value="2"/>
</dbReference>
<dbReference type="PIRSF" id="PIRSF036946">
    <property type="entry name" value="Arg_N-mtase"/>
    <property type="match status" value="1"/>
</dbReference>
<dbReference type="SUPFAM" id="SSF53335">
    <property type="entry name" value="S-adenosyl-L-methionine-dependent methyltransferases"/>
    <property type="match status" value="2"/>
</dbReference>
<dbReference type="PROSITE" id="PS51678">
    <property type="entry name" value="SAM_MT_PRMT"/>
    <property type="match status" value="2"/>
</dbReference>
<comment type="function">
    <text evidence="3">Arginine methyltransferase that can both catalyze the formation of omega-N monomethylarginine (MMA) and symmetrical dimethylarginine (sDMA), with a preference for the formation of MMA. Specifically mediates the symmetrical dimethylation of arginine residues in the small nuclear ribonucleoproteins Sm D1 (SNRPD1) and Sm D3 (SNRPD3); such methylation being required for the assembly and biogenesis of snRNP core particles. Specifically mediates the symmetric dimethylation of histone H4 'Arg-3' to form H4R3me2s. Plays a role in gene imprinting by being recruited by CTCFL at the H19 imprinted control region (ICR) and methylating histone H4 to form H4R3me2s, possibly leading to recruit DNA methyltransferases at these sites. May also play a role in embryonic stem cell (ESC) pluripotency. Also able to mediate the arginine methylation of histone H2A and myelin basic protein (MBP) in vitro; the relevance of such results is however unclear in vivo.</text>
</comment>
<comment type="catalytic activity">
    <reaction evidence="3">
        <text>L-arginyl-[protein] + S-adenosyl-L-methionine = N(omega)-methyl-L-arginyl-[protein] + S-adenosyl-L-homocysteine + H(+)</text>
        <dbReference type="Rhea" id="RHEA:48100"/>
        <dbReference type="Rhea" id="RHEA-COMP:10532"/>
        <dbReference type="Rhea" id="RHEA-COMP:11990"/>
        <dbReference type="ChEBI" id="CHEBI:15378"/>
        <dbReference type="ChEBI" id="CHEBI:29965"/>
        <dbReference type="ChEBI" id="CHEBI:57856"/>
        <dbReference type="ChEBI" id="CHEBI:59789"/>
        <dbReference type="ChEBI" id="CHEBI:65280"/>
        <dbReference type="EC" id="2.1.1.321"/>
    </reaction>
</comment>
<comment type="subunit">
    <text evidence="1">Homodimer and heterodimer. Interacts with CTCFL, PRMT5 and SNRPD3 (By similarity).</text>
</comment>
<comment type="subcellular location">
    <subcellularLocation>
        <location evidence="1">Cytoplasm</location>
        <location evidence="1">Cytosol</location>
    </subcellularLocation>
    <subcellularLocation>
        <location evidence="1">Nucleus</location>
    </subcellularLocation>
</comment>
<comment type="similarity">
    <text evidence="4">Belongs to the class I-like SAM-binding methyltransferase superfamily. Protein arginine N-methyltransferase family. PRMT7 subfamily.</text>
</comment>
<name>ANM7_BOVIN</name>
<accession>A6QQV6</accession>
<keyword id="KW-0156">Chromatin regulator</keyword>
<keyword id="KW-0963">Cytoplasm</keyword>
<keyword id="KW-0221">Differentiation</keyword>
<keyword id="KW-0488">Methylation</keyword>
<keyword id="KW-0489">Methyltransferase</keyword>
<keyword id="KW-0539">Nucleus</keyword>
<keyword id="KW-1185">Reference proteome</keyword>
<keyword id="KW-0677">Repeat</keyword>
<keyword id="KW-0949">S-adenosyl-L-methionine</keyword>
<keyword id="KW-0804">Transcription</keyword>
<keyword id="KW-0805">Transcription regulation</keyword>
<keyword id="KW-0808">Transferase</keyword>